<evidence type="ECO:0000255" key="1">
    <source>
        <dbReference type="HAMAP-Rule" id="MF_00386"/>
    </source>
</evidence>
<keyword id="KW-0997">Cell inner membrane</keyword>
<keyword id="KW-1003">Cell membrane</keyword>
<keyword id="KW-0472">Membrane</keyword>
<keyword id="KW-1185">Reference proteome</keyword>
<dbReference type="EMBL" id="CP000100">
    <property type="protein sequence ID" value="ABB57516.1"/>
    <property type="molecule type" value="Genomic_DNA"/>
</dbReference>
<dbReference type="STRING" id="1140.Synpcc7942_1486"/>
<dbReference type="PaxDb" id="1140-Synpcc7942_1486"/>
<dbReference type="KEGG" id="syf:Synpcc7942_1486"/>
<dbReference type="eggNOG" id="COG0759">
    <property type="taxonomic scope" value="Bacteria"/>
</dbReference>
<dbReference type="HOGENOM" id="CLU_144811_6_0_3"/>
<dbReference type="OrthoDB" id="9801753at2"/>
<dbReference type="BioCyc" id="SYNEL:SYNPCC7942_1486-MONOMER"/>
<dbReference type="Proteomes" id="UP000889800">
    <property type="component" value="Chromosome"/>
</dbReference>
<dbReference type="GO" id="GO:0005886">
    <property type="term" value="C:plasma membrane"/>
    <property type="evidence" value="ECO:0007669"/>
    <property type="project" value="UniProtKB-SubCell"/>
</dbReference>
<dbReference type="HAMAP" id="MF_00386">
    <property type="entry name" value="UPF0161_YidD"/>
    <property type="match status" value="1"/>
</dbReference>
<dbReference type="InterPro" id="IPR002696">
    <property type="entry name" value="Membr_insert_effic_factor_YidD"/>
</dbReference>
<dbReference type="NCBIfam" id="TIGR00278">
    <property type="entry name" value="membrane protein insertion efficiency factor YidD"/>
    <property type="match status" value="1"/>
</dbReference>
<dbReference type="PANTHER" id="PTHR33383">
    <property type="entry name" value="MEMBRANE PROTEIN INSERTION EFFICIENCY FACTOR-RELATED"/>
    <property type="match status" value="1"/>
</dbReference>
<dbReference type="PANTHER" id="PTHR33383:SF1">
    <property type="entry name" value="MEMBRANE PROTEIN INSERTION EFFICIENCY FACTOR-RELATED"/>
    <property type="match status" value="1"/>
</dbReference>
<dbReference type="Pfam" id="PF01809">
    <property type="entry name" value="YidD"/>
    <property type="match status" value="1"/>
</dbReference>
<dbReference type="SMART" id="SM01234">
    <property type="entry name" value="Haemolytic"/>
    <property type="match status" value="1"/>
</dbReference>
<name>YIDD_SYNE7</name>
<proteinExistence type="inferred from homology"/>
<sequence>MKLLLLALIQFYRRWISPLTPASCRFYPTCSQYGLEAIDRFGPLKGSWLTLCRILRCHPFHPGGYDPVPPLPSCSCGKSPCD</sequence>
<protein>
    <recommendedName>
        <fullName evidence="1">Putative membrane protein insertion efficiency factor</fullName>
    </recommendedName>
</protein>
<organism>
    <name type="scientific">Synechococcus elongatus (strain ATCC 33912 / PCC 7942 / FACHB-805)</name>
    <name type="common">Anacystis nidulans R2</name>
    <dbReference type="NCBI Taxonomy" id="1140"/>
    <lineage>
        <taxon>Bacteria</taxon>
        <taxon>Bacillati</taxon>
        <taxon>Cyanobacteriota</taxon>
        <taxon>Cyanophyceae</taxon>
        <taxon>Synechococcales</taxon>
        <taxon>Synechococcaceae</taxon>
        <taxon>Synechococcus</taxon>
    </lineage>
</organism>
<feature type="chain" id="PRO_0000253190" description="Putative membrane protein insertion efficiency factor">
    <location>
        <begin position="1"/>
        <end position="82"/>
    </location>
</feature>
<reference key="1">
    <citation type="submission" date="2005-08" db="EMBL/GenBank/DDBJ databases">
        <title>Complete sequence of chromosome 1 of Synechococcus elongatus PCC 7942.</title>
        <authorList>
            <consortium name="US DOE Joint Genome Institute"/>
            <person name="Copeland A."/>
            <person name="Lucas S."/>
            <person name="Lapidus A."/>
            <person name="Barry K."/>
            <person name="Detter J.C."/>
            <person name="Glavina T."/>
            <person name="Hammon N."/>
            <person name="Israni S."/>
            <person name="Pitluck S."/>
            <person name="Schmutz J."/>
            <person name="Larimer F."/>
            <person name="Land M."/>
            <person name="Kyrpides N."/>
            <person name="Lykidis A."/>
            <person name="Golden S."/>
            <person name="Richardson P."/>
        </authorList>
    </citation>
    <scope>NUCLEOTIDE SEQUENCE [LARGE SCALE GENOMIC DNA]</scope>
    <source>
        <strain>ATCC 33912 / PCC 7942 / FACHB-805</strain>
    </source>
</reference>
<gene>
    <name type="ordered locus">Synpcc7942_1486</name>
</gene>
<accession>Q31N53</accession>
<comment type="function">
    <text evidence="1">Could be involved in insertion of integral membrane proteins into the membrane.</text>
</comment>
<comment type="subcellular location">
    <subcellularLocation>
        <location evidence="1">Cell inner membrane</location>
        <topology evidence="1">Peripheral membrane protein</topology>
        <orientation evidence="1">Cytoplasmic side</orientation>
    </subcellularLocation>
</comment>
<comment type="similarity">
    <text evidence="1">Belongs to the UPF0161 family.</text>
</comment>